<organism>
    <name type="scientific">Bacillus subtilis (strain 168)</name>
    <dbReference type="NCBI Taxonomy" id="224308"/>
    <lineage>
        <taxon>Bacteria</taxon>
        <taxon>Bacillati</taxon>
        <taxon>Bacillota</taxon>
        <taxon>Bacilli</taxon>
        <taxon>Bacillales</taxon>
        <taxon>Bacillaceae</taxon>
        <taxon>Bacillus</taxon>
    </lineage>
</organism>
<feature type="chain" id="PRO_0000360475" description="SPbeta prophage-derived uncharacterized protein YoqS">
    <location>
        <begin position="1"/>
        <end position="115"/>
    </location>
</feature>
<name>YOQS_BACSU</name>
<gene>
    <name type="primary">yoqS</name>
    <name type="ordered locus">BSU20530</name>
</gene>
<reference key="1">
    <citation type="journal article" date="1997" name="Nature">
        <title>The complete genome sequence of the Gram-positive bacterium Bacillus subtilis.</title>
        <authorList>
            <person name="Kunst F."/>
            <person name="Ogasawara N."/>
            <person name="Moszer I."/>
            <person name="Albertini A.M."/>
            <person name="Alloni G."/>
            <person name="Azevedo V."/>
            <person name="Bertero M.G."/>
            <person name="Bessieres P."/>
            <person name="Bolotin A."/>
            <person name="Borchert S."/>
            <person name="Borriss R."/>
            <person name="Boursier L."/>
            <person name="Brans A."/>
            <person name="Braun M."/>
            <person name="Brignell S.C."/>
            <person name="Bron S."/>
            <person name="Brouillet S."/>
            <person name="Bruschi C.V."/>
            <person name="Caldwell B."/>
            <person name="Capuano V."/>
            <person name="Carter N.M."/>
            <person name="Choi S.-K."/>
            <person name="Codani J.-J."/>
            <person name="Connerton I.F."/>
            <person name="Cummings N.J."/>
            <person name="Daniel R.A."/>
            <person name="Denizot F."/>
            <person name="Devine K.M."/>
            <person name="Duesterhoeft A."/>
            <person name="Ehrlich S.D."/>
            <person name="Emmerson P.T."/>
            <person name="Entian K.-D."/>
            <person name="Errington J."/>
            <person name="Fabret C."/>
            <person name="Ferrari E."/>
            <person name="Foulger D."/>
            <person name="Fritz C."/>
            <person name="Fujita M."/>
            <person name="Fujita Y."/>
            <person name="Fuma S."/>
            <person name="Galizzi A."/>
            <person name="Galleron N."/>
            <person name="Ghim S.-Y."/>
            <person name="Glaser P."/>
            <person name="Goffeau A."/>
            <person name="Golightly E.J."/>
            <person name="Grandi G."/>
            <person name="Guiseppi G."/>
            <person name="Guy B.J."/>
            <person name="Haga K."/>
            <person name="Haiech J."/>
            <person name="Harwood C.R."/>
            <person name="Henaut A."/>
            <person name="Hilbert H."/>
            <person name="Holsappel S."/>
            <person name="Hosono S."/>
            <person name="Hullo M.-F."/>
            <person name="Itaya M."/>
            <person name="Jones L.-M."/>
            <person name="Joris B."/>
            <person name="Karamata D."/>
            <person name="Kasahara Y."/>
            <person name="Klaerr-Blanchard M."/>
            <person name="Klein C."/>
            <person name="Kobayashi Y."/>
            <person name="Koetter P."/>
            <person name="Koningstein G."/>
            <person name="Krogh S."/>
            <person name="Kumano M."/>
            <person name="Kurita K."/>
            <person name="Lapidus A."/>
            <person name="Lardinois S."/>
            <person name="Lauber J."/>
            <person name="Lazarevic V."/>
            <person name="Lee S.-M."/>
            <person name="Levine A."/>
            <person name="Liu H."/>
            <person name="Masuda S."/>
            <person name="Mauel C."/>
            <person name="Medigue C."/>
            <person name="Medina N."/>
            <person name="Mellado R.P."/>
            <person name="Mizuno M."/>
            <person name="Moestl D."/>
            <person name="Nakai S."/>
            <person name="Noback M."/>
            <person name="Noone D."/>
            <person name="O'Reilly M."/>
            <person name="Ogawa K."/>
            <person name="Ogiwara A."/>
            <person name="Oudega B."/>
            <person name="Park S.-H."/>
            <person name="Parro V."/>
            <person name="Pohl T.M."/>
            <person name="Portetelle D."/>
            <person name="Porwollik S."/>
            <person name="Prescott A.M."/>
            <person name="Presecan E."/>
            <person name="Pujic P."/>
            <person name="Purnelle B."/>
            <person name="Rapoport G."/>
            <person name="Rey M."/>
            <person name="Reynolds S."/>
            <person name="Rieger M."/>
            <person name="Rivolta C."/>
            <person name="Rocha E."/>
            <person name="Roche B."/>
            <person name="Rose M."/>
            <person name="Sadaie Y."/>
            <person name="Sato T."/>
            <person name="Scanlan E."/>
            <person name="Schleich S."/>
            <person name="Schroeter R."/>
            <person name="Scoffone F."/>
            <person name="Sekiguchi J."/>
            <person name="Sekowska A."/>
            <person name="Seror S.J."/>
            <person name="Serror P."/>
            <person name="Shin B.-S."/>
            <person name="Soldo B."/>
            <person name="Sorokin A."/>
            <person name="Tacconi E."/>
            <person name="Takagi T."/>
            <person name="Takahashi H."/>
            <person name="Takemaru K."/>
            <person name="Takeuchi M."/>
            <person name="Tamakoshi A."/>
            <person name="Tanaka T."/>
            <person name="Terpstra P."/>
            <person name="Tognoni A."/>
            <person name="Tosato V."/>
            <person name="Uchiyama S."/>
            <person name="Vandenbol M."/>
            <person name="Vannier F."/>
            <person name="Vassarotti A."/>
            <person name="Viari A."/>
            <person name="Wambutt R."/>
            <person name="Wedler E."/>
            <person name="Wedler H."/>
            <person name="Weitzenegger T."/>
            <person name="Winters P."/>
            <person name="Wipat A."/>
            <person name="Yamamoto H."/>
            <person name="Yamane K."/>
            <person name="Yasumoto K."/>
            <person name="Yata K."/>
            <person name="Yoshida K."/>
            <person name="Yoshikawa H.-F."/>
            <person name="Zumstein E."/>
            <person name="Yoshikawa H."/>
            <person name="Danchin A."/>
        </authorList>
    </citation>
    <scope>NUCLEOTIDE SEQUENCE [LARGE SCALE GENOMIC DNA]</scope>
    <source>
        <strain>168</strain>
    </source>
</reference>
<sequence length="115" mass="13455">MYRKIFDMVNGSEEQSKITDWLYKLMIEDENSLYKIDIKVSKRRISEQGDIYREEGEYIENADLQTLPIGTKSFVQNGCWKGEIVSNEKKHLYMPQIGEMREIKVGSTGLNIEIE</sequence>
<dbReference type="EMBL" id="AL009126">
    <property type="protein sequence ID" value="CAB13945.1"/>
    <property type="molecule type" value="Genomic_DNA"/>
</dbReference>
<dbReference type="RefSeq" id="NP_389935.1">
    <property type="nucleotide sequence ID" value="NC_000964.3"/>
</dbReference>
<dbReference type="RefSeq" id="WP_004399296.1">
    <property type="nucleotide sequence ID" value="NZ_OZ025638.1"/>
</dbReference>
<dbReference type="SMR" id="O31920"/>
<dbReference type="FunCoup" id="O31920">
    <property type="interactions" value="29"/>
</dbReference>
<dbReference type="STRING" id="224308.BSU20530"/>
<dbReference type="PaxDb" id="224308-BSU20530"/>
<dbReference type="EnsemblBacteria" id="CAB13945">
    <property type="protein sequence ID" value="CAB13945"/>
    <property type="gene ID" value="BSU_20530"/>
</dbReference>
<dbReference type="GeneID" id="939995"/>
<dbReference type="KEGG" id="bsu:BSU20530"/>
<dbReference type="PATRIC" id="fig|224308.179.peg.2243"/>
<dbReference type="InParanoid" id="O31920"/>
<dbReference type="OrthoDB" id="2894487at2"/>
<dbReference type="BioCyc" id="BSUB:BSU20530-MONOMER"/>
<dbReference type="Proteomes" id="UP000001570">
    <property type="component" value="Chromosome"/>
</dbReference>
<proteinExistence type="predicted"/>
<protein>
    <recommendedName>
        <fullName>SPbeta prophage-derived uncharacterized protein YoqS</fullName>
    </recommendedName>
</protein>
<keyword id="KW-1185">Reference proteome</keyword>
<accession>O31920</accession>